<organism>
    <name type="scientific">Rhodopseudomonas palustris (strain ATCC BAA-98 / CGA009)</name>
    <dbReference type="NCBI Taxonomy" id="258594"/>
    <lineage>
        <taxon>Bacteria</taxon>
        <taxon>Pseudomonadati</taxon>
        <taxon>Pseudomonadota</taxon>
        <taxon>Alphaproteobacteria</taxon>
        <taxon>Hyphomicrobiales</taxon>
        <taxon>Nitrobacteraceae</taxon>
        <taxon>Rhodopseudomonas</taxon>
    </lineage>
</organism>
<sequence>MNAPVKPSKLIKGATGDWEVVIGLEIHAQVSSNAKLFSGAATAFGGDQNTHVSLVDAAMPGMLPVINEECVRQAIRSGLGLNAKIHLRSVFDRKNYFYPDLPQGYQISQYKSPIVGEGEVVVDLPDGDSITVGIERLHLEQDAGKLLHDQHPTSTFVDLNRSGVALMEIVSKPDLRSSEQAKAYVSKLRTIMRYLGTCDGDMEKGSLRADVNVSVRRPGEPYGTRCEIKNVNSIRFIGQAIEYEARRQIGILEDGGTIDQETRLFDANKGETRSMRSKEEAHDYRYFPDPDLLPLEFTQAYVDDLKAGLPELPDAKKERFVHDFGLSVEDAGVLVSERESAEFYEAVLAQLKDQGRDGKLAANWVINELFGRLNKDGQSIDASPVSAAQLAAIVELIGEGTISGKIAKELFEIVWTEGGDPRTLVEQRGMKQVTDLSAIEKVVDDIVAANPDKVAQVVAKPAMLGWFVGQVMKSSGGKANPQAVNDLLKRKLGL</sequence>
<accession>P61347</accession>
<protein>
    <recommendedName>
        <fullName evidence="1">Aspartyl/glutamyl-tRNA(Asn/Gln) amidotransferase subunit B</fullName>
        <shortName evidence="1">Asp/Glu-ADT subunit B</shortName>
        <ecNumber evidence="1">6.3.5.-</ecNumber>
    </recommendedName>
</protein>
<gene>
    <name evidence="1" type="primary">gatB</name>
    <name type="ordered locus">RPA3104</name>
</gene>
<name>GATB_RHOPA</name>
<dbReference type="EC" id="6.3.5.-" evidence="1"/>
<dbReference type="EMBL" id="BX572603">
    <property type="protein sequence ID" value="CAE28545.1"/>
    <property type="molecule type" value="Genomic_DNA"/>
</dbReference>
<dbReference type="RefSeq" id="WP_011158649.1">
    <property type="nucleotide sequence ID" value="NZ_CP116810.1"/>
</dbReference>
<dbReference type="SMR" id="P61347"/>
<dbReference type="STRING" id="258594.RPA3104"/>
<dbReference type="GeneID" id="66894186"/>
<dbReference type="eggNOG" id="COG0064">
    <property type="taxonomic scope" value="Bacteria"/>
</dbReference>
<dbReference type="HOGENOM" id="CLU_019240_0_0_5"/>
<dbReference type="PhylomeDB" id="P61347"/>
<dbReference type="GO" id="GO:0050566">
    <property type="term" value="F:asparaginyl-tRNA synthase (glutamine-hydrolyzing) activity"/>
    <property type="evidence" value="ECO:0007669"/>
    <property type="project" value="RHEA"/>
</dbReference>
<dbReference type="GO" id="GO:0005524">
    <property type="term" value="F:ATP binding"/>
    <property type="evidence" value="ECO:0007669"/>
    <property type="project" value="UniProtKB-KW"/>
</dbReference>
<dbReference type="GO" id="GO:0050567">
    <property type="term" value="F:glutaminyl-tRNA synthase (glutamine-hydrolyzing) activity"/>
    <property type="evidence" value="ECO:0007669"/>
    <property type="project" value="UniProtKB-UniRule"/>
</dbReference>
<dbReference type="GO" id="GO:0070681">
    <property type="term" value="P:glutaminyl-tRNAGln biosynthesis via transamidation"/>
    <property type="evidence" value="ECO:0007669"/>
    <property type="project" value="TreeGrafter"/>
</dbReference>
<dbReference type="GO" id="GO:0006412">
    <property type="term" value="P:translation"/>
    <property type="evidence" value="ECO:0007669"/>
    <property type="project" value="UniProtKB-UniRule"/>
</dbReference>
<dbReference type="FunFam" id="1.10.10.410:FF:000001">
    <property type="entry name" value="Aspartyl/glutamyl-tRNA(Asn/Gln) amidotransferase subunit B"/>
    <property type="match status" value="1"/>
</dbReference>
<dbReference type="FunFam" id="1.10.150.380:FF:000001">
    <property type="entry name" value="Aspartyl/glutamyl-tRNA(Asn/Gln) amidotransferase subunit B"/>
    <property type="match status" value="1"/>
</dbReference>
<dbReference type="Gene3D" id="1.10.10.410">
    <property type="match status" value="1"/>
</dbReference>
<dbReference type="Gene3D" id="1.10.150.380">
    <property type="entry name" value="GatB domain, N-terminal subdomain"/>
    <property type="match status" value="1"/>
</dbReference>
<dbReference type="HAMAP" id="MF_00121">
    <property type="entry name" value="GatB"/>
    <property type="match status" value="1"/>
</dbReference>
<dbReference type="InterPro" id="IPR017959">
    <property type="entry name" value="Asn/Gln-tRNA_amidoTrfase_suB/E"/>
</dbReference>
<dbReference type="InterPro" id="IPR006075">
    <property type="entry name" value="Asn/Gln-tRNA_Trfase_suB/E_cat"/>
</dbReference>
<dbReference type="InterPro" id="IPR018027">
    <property type="entry name" value="Asn/Gln_amidotransferase"/>
</dbReference>
<dbReference type="InterPro" id="IPR003789">
    <property type="entry name" value="Asn/Gln_tRNA_amidoTrase-B-like"/>
</dbReference>
<dbReference type="InterPro" id="IPR004413">
    <property type="entry name" value="GatB"/>
</dbReference>
<dbReference type="InterPro" id="IPR042114">
    <property type="entry name" value="GatB_C_1"/>
</dbReference>
<dbReference type="InterPro" id="IPR023168">
    <property type="entry name" value="GatB_Yqey_C_2"/>
</dbReference>
<dbReference type="InterPro" id="IPR017958">
    <property type="entry name" value="Gln-tRNA_amidoTrfase_suB_CS"/>
</dbReference>
<dbReference type="InterPro" id="IPR014746">
    <property type="entry name" value="Gln_synth/guanido_kin_cat_dom"/>
</dbReference>
<dbReference type="NCBIfam" id="TIGR00133">
    <property type="entry name" value="gatB"/>
    <property type="match status" value="1"/>
</dbReference>
<dbReference type="NCBIfam" id="NF004012">
    <property type="entry name" value="PRK05477.1-2"/>
    <property type="match status" value="1"/>
</dbReference>
<dbReference type="NCBIfam" id="NF004014">
    <property type="entry name" value="PRK05477.1-4"/>
    <property type="match status" value="1"/>
</dbReference>
<dbReference type="NCBIfam" id="NF004015">
    <property type="entry name" value="PRK05477.1-5"/>
    <property type="match status" value="1"/>
</dbReference>
<dbReference type="PANTHER" id="PTHR11659">
    <property type="entry name" value="GLUTAMYL-TRNA GLN AMIDOTRANSFERASE SUBUNIT B MITOCHONDRIAL AND PROKARYOTIC PET112-RELATED"/>
    <property type="match status" value="1"/>
</dbReference>
<dbReference type="PANTHER" id="PTHR11659:SF0">
    <property type="entry name" value="GLUTAMYL-TRNA(GLN) AMIDOTRANSFERASE SUBUNIT B, MITOCHONDRIAL"/>
    <property type="match status" value="1"/>
</dbReference>
<dbReference type="Pfam" id="PF02934">
    <property type="entry name" value="GatB_N"/>
    <property type="match status" value="1"/>
</dbReference>
<dbReference type="Pfam" id="PF02637">
    <property type="entry name" value="GatB_Yqey"/>
    <property type="match status" value="1"/>
</dbReference>
<dbReference type="SMART" id="SM00845">
    <property type="entry name" value="GatB_Yqey"/>
    <property type="match status" value="1"/>
</dbReference>
<dbReference type="SUPFAM" id="SSF89095">
    <property type="entry name" value="GatB/YqeY motif"/>
    <property type="match status" value="1"/>
</dbReference>
<dbReference type="SUPFAM" id="SSF55931">
    <property type="entry name" value="Glutamine synthetase/guanido kinase"/>
    <property type="match status" value="1"/>
</dbReference>
<dbReference type="PROSITE" id="PS01234">
    <property type="entry name" value="GATB"/>
    <property type="match status" value="1"/>
</dbReference>
<keyword id="KW-0067">ATP-binding</keyword>
<keyword id="KW-0436">Ligase</keyword>
<keyword id="KW-0547">Nucleotide-binding</keyword>
<keyword id="KW-0648">Protein biosynthesis</keyword>
<feature type="chain" id="PRO_0000148830" description="Aspartyl/glutamyl-tRNA(Asn/Gln) amidotransferase subunit B">
    <location>
        <begin position="1"/>
        <end position="494"/>
    </location>
</feature>
<comment type="function">
    <text evidence="1">Allows the formation of correctly charged Asn-tRNA(Asn) or Gln-tRNA(Gln) through the transamidation of misacylated Asp-tRNA(Asn) or Glu-tRNA(Gln) in organisms which lack either or both of asparaginyl-tRNA or glutaminyl-tRNA synthetases. The reaction takes place in the presence of glutamine and ATP through an activated phospho-Asp-tRNA(Asn) or phospho-Glu-tRNA(Gln).</text>
</comment>
<comment type="catalytic activity">
    <reaction evidence="1">
        <text>L-glutamyl-tRNA(Gln) + L-glutamine + ATP + H2O = L-glutaminyl-tRNA(Gln) + L-glutamate + ADP + phosphate + H(+)</text>
        <dbReference type="Rhea" id="RHEA:17521"/>
        <dbReference type="Rhea" id="RHEA-COMP:9681"/>
        <dbReference type="Rhea" id="RHEA-COMP:9684"/>
        <dbReference type="ChEBI" id="CHEBI:15377"/>
        <dbReference type="ChEBI" id="CHEBI:15378"/>
        <dbReference type="ChEBI" id="CHEBI:29985"/>
        <dbReference type="ChEBI" id="CHEBI:30616"/>
        <dbReference type="ChEBI" id="CHEBI:43474"/>
        <dbReference type="ChEBI" id="CHEBI:58359"/>
        <dbReference type="ChEBI" id="CHEBI:78520"/>
        <dbReference type="ChEBI" id="CHEBI:78521"/>
        <dbReference type="ChEBI" id="CHEBI:456216"/>
    </reaction>
</comment>
<comment type="catalytic activity">
    <reaction evidence="1">
        <text>L-aspartyl-tRNA(Asn) + L-glutamine + ATP + H2O = L-asparaginyl-tRNA(Asn) + L-glutamate + ADP + phosphate + 2 H(+)</text>
        <dbReference type="Rhea" id="RHEA:14513"/>
        <dbReference type="Rhea" id="RHEA-COMP:9674"/>
        <dbReference type="Rhea" id="RHEA-COMP:9677"/>
        <dbReference type="ChEBI" id="CHEBI:15377"/>
        <dbReference type="ChEBI" id="CHEBI:15378"/>
        <dbReference type="ChEBI" id="CHEBI:29985"/>
        <dbReference type="ChEBI" id="CHEBI:30616"/>
        <dbReference type="ChEBI" id="CHEBI:43474"/>
        <dbReference type="ChEBI" id="CHEBI:58359"/>
        <dbReference type="ChEBI" id="CHEBI:78515"/>
        <dbReference type="ChEBI" id="CHEBI:78516"/>
        <dbReference type="ChEBI" id="CHEBI:456216"/>
    </reaction>
</comment>
<comment type="subunit">
    <text evidence="1">Heterotrimer of A, B and C subunits.</text>
</comment>
<comment type="similarity">
    <text evidence="1">Belongs to the GatB/GatE family. GatB subfamily.</text>
</comment>
<reference key="1">
    <citation type="journal article" date="2004" name="Nat. Biotechnol.">
        <title>Complete genome sequence of the metabolically versatile photosynthetic bacterium Rhodopseudomonas palustris.</title>
        <authorList>
            <person name="Larimer F.W."/>
            <person name="Chain P."/>
            <person name="Hauser L."/>
            <person name="Lamerdin J.E."/>
            <person name="Malfatti S."/>
            <person name="Do L."/>
            <person name="Land M.L."/>
            <person name="Pelletier D.A."/>
            <person name="Beatty J.T."/>
            <person name="Lang A.S."/>
            <person name="Tabita F.R."/>
            <person name="Gibson J.L."/>
            <person name="Hanson T.E."/>
            <person name="Bobst C."/>
            <person name="Torres y Torres J.L."/>
            <person name="Peres C."/>
            <person name="Harrison F.H."/>
            <person name="Gibson J."/>
            <person name="Harwood C.S."/>
        </authorList>
    </citation>
    <scope>NUCLEOTIDE SEQUENCE [LARGE SCALE GENOMIC DNA]</scope>
    <source>
        <strain>ATCC BAA-98 / CGA009</strain>
    </source>
</reference>
<proteinExistence type="inferred from homology"/>
<evidence type="ECO:0000255" key="1">
    <source>
        <dbReference type="HAMAP-Rule" id="MF_00121"/>
    </source>
</evidence>